<protein>
    <recommendedName>
        <fullName evidence="1">Spermidine/putrescine import ATP-binding protein PotA</fullName>
        <ecNumber evidence="1">7.6.2.11</ecNumber>
    </recommendedName>
</protein>
<dbReference type="EC" id="7.6.2.11" evidence="1"/>
<dbReference type="EMBL" id="CP000382">
    <property type="protein sequence ID" value="ABK61763.1"/>
    <property type="molecule type" value="Genomic_DNA"/>
</dbReference>
<dbReference type="RefSeq" id="WP_011721317.1">
    <property type="nucleotide sequence ID" value="NC_008593.1"/>
</dbReference>
<dbReference type="SMR" id="A0PY57"/>
<dbReference type="STRING" id="386415.NT01CX_1226"/>
<dbReference type="KEGG" id="cno:NT01CX_1226"/>
<dbReference type="eggNOG" id="COG3842">
    <property type="taxonomic scope" value="Bacteria"/>
</dbReference>
<dbReference type="HOGENOM" id="CLU_000604_1_1_9"/>
<dbReference type="Proteomes" id="UP000008220">
    <property type="component" value="Chromosome"/>
</dbReference>
<dbReference type="GO" id="GO:0043190">
    <property type="term" value="C:ATP-binding cassette (ABC) transporter complex"/>
    <property type="evidence" value="ECO:0007669"/>
    <property type="project" value="InterPro"/>
</dbReference>
<dbReference type="GO" id="GO:0015594">
    <property type="term" value="F:ABC-type putrescine transporter activity"/>
    <property type="evidence" value="ECO:0007669"/>
    <property type="project" value="InterPro"/>
</dbReference>
<dbReference type="GO" id="GO:0005524">
    <property type="term" value="F:ATP binding"/>
    <property type="evidence" value="ECO:0007669"/>
    <property type="project" value="UniProtKB-KW"/>
</dbReference>
<dbReference type="GO" id="GO:0016887">
    <property type="term" value="F:ATP hydrolysis activity"/>
    <property type="evidence" value="ECO:0007669"/>
    <property type="project" value="InterPro"/>
</dbReference>
<dbReference type="CDD" id="cd03300">
    <property type="entry name" value="ABC_PotA_N"/>
    <property type="match status" value="1"/>
</dbReference>
<dbReference type="FunFam" id="3.40.50.300:FF:000133">
    <property type="entry name" value="Spermidine/putrescine import ATP-binding protein PotA"/>
    <property type="match status" value="1"/>
</dbReference>
<dbReference type="Gene3D" id="2.40.50.100">
    <property type="match status" value="1"/>
</dbReference>
<dbReference type="Gene3D" id="3.40.50.300">
    <property type="entry name" value="P-loop containing nucleotide triphosphate hydrolases"/>
    <property type="match status" value="1"/>
</dbReference>
<dbReference type="InterPro" id="IPR003593">
    <property type="entry name" value="AAA+_ATPase"/>
</dbReference>
<dbReference type="InterPro" id="IPR050093">
    <property type="entry name" value="ABC_SmlMolc_Importer"/>
</dbReference>
<dbReference type="InterPro" id="IPR003439">
    <property type="entry name" value="ABC_transporter-like_ATP-bd"/>
</dbReference>
<dbReference type="InterPro" id="IPR017871">
    <property type="entry name" value="ABC_transporter-like_CS"/>
</dbReference>
<dbReference type="InterPro" id="IPR008995">
    <property type="entry name" value="Mo/tungstate-bd_C_term_dom"/>
</dbReference>
<dbReference type="InterPro" id="IPR027417">
    <property type="entry name" value="P-loop_NTPase"/>
</dbReference>
<dbReference type="InterPro" id="IPR005893">
    <property type="entry name" value="PotA-like"/>
</dbReference>
<dbReference type="InterPro" id="IPR017879">
    <property type="entry name" value="PotA_ATP-bd"/>
</dbReference>
<dbReference type="InterPro" id="IPR013611">
    <property type="entry name" value="Transp-assoc_OB_typ2"/>
</dbReference>
<dbReference type="NCBIfam" id="NF043075">
    <property type="entry name" value="MMSYN1_0197"/>
    <property type="match status" value="1"/>
</dbReference>
<dbReference type="NCBIfam" id="TIGR01187">
    <property type="entry name" value="potA"/>
    <property type="match status" value="1"/>
</dbReference>
<dbReference type="PANTHER" id="PTHR42781">
    <property type="entry name" value="SPERMIDINE/PUTRESCINE IMPORT ATP-BINDING PROTEIN POTA"/>
    <property type="match status" value="1"/>
</dbReference>
<dbReference type="PANTHER" id="PTHR42781:SF4">
    <property type="entry name" value="SPERMIDINE_PUTRESCINE IMPORT ATP-BINDING PROTEIN POTA"/>
    <property type="match status" value="1"/>
</dbReference>
<dbReference type="Pfam" id="PF00005">
    <property type="entry name" value="ABC_tran"/>
    <property type="match status" value="1"/>
</dbReference>
<dbReference type="Pfam" id="PF08402">
    <property type="entry name" value="TOBE_2"/>
    <property type="match status" value="1"/>
</dbReference>
<dbReference type="SMART" id="SM00382">
    <property type="entry name" value="AAA"/>
    <property type="match status" value="1"/>
</dbReference>
<dbReference type="SUPFAM" id="SSF50331">
    <property type="entry name" value="MOP-like"/>
    <property type="match status" value="1"/>
</dbReference>
<dbReference type="SUPFAM" id="SSF52540">
    <property type="entry name" value="P-loop containing nucleoside triphosphate hydrolases"/>
    <property type="match status" value="1"/>
</dbReference>
<dbReference type="PROSITE" id="PS00211">
    <property type="entry name" value="ABC_TRANSPORTER_1"/>
    <property type="match status" value="1"/>
</dbReference>
<dbReference type="PROSITE" id="PS50893">
    <property type="entry name" value="ABC_TRANSPORTER_2"/>
    <property type="match status" value="1"/>
</dbReference>
<dbReference type="PROSITE" id="PS51305">
    <property type="entry name" value="POTA"/>
    <property type="match status" value="1"/>
</dbReference>
<sequence>MAENIIEIKNVYKEFNGVPILKDINLNIKKNEFLTLLGPSGCGKTTTLRILGGFEDATNGEVIFEGKKINDVPPYKRQINTVFQKYALFPHMSIFENIAFGLNIKKVPKDQIKTRVKRMLKLVDLEGYENRSIDSLSGGQQQRIAIARALVNEPKVLLLDEPLGALDLKLRKEMQIELKKMQKQLGITFIYVTHDQDEALTMSDKIVVMDKGEIQQMGTPEDIYNEPKNAFVAKFIGASNIVDGIMIEDFLVDFAGRKFECVDKGFEPNEDIQVVVRPEDIKIVDKDKGMLEGVVESETFKGVHYEMIVKENDREWLVHSTLKSEVGTVVGMNIFPEDIHIMKKVSD</sequence>
<keyword id="KW-0067">ATP-binding</keyword>
<keyword id="KW-1003">Cell membrane</keyword>
<keyword id="KW-0472">Membrane</keyword>
<keyword id="KW-0547">Nucleotide-binding</keyword>
<keyword id="KW-1185">Reference proteome</keyword>
<keyword id="KW-1278">Translocase</keyword>
<keyword id="KW-0813">Transport</keyword>
<feature type="chain" id="PRO_0000286206" description="Spermidine/putrescine import ATP-binding protein PotA">
    <location>
        <begin position="1"/>
        <end position="347"/>
    </location>
</feature>
<feature type="domain" description="ABC transporter" evidence="1">
    <location>
        <begin position="6"/>
        <end position="236"/>
    </location>
</feature>
<feature type="binding site" evidence="1">
    <location>
        <begin position="38"/>
        <end position="45"/>
    </location>
    <ligand>
        <name>ATP</name>
        <dbReference type="ChEBI" id="CHEBI:30616"/>
    </ligand>
</feature>
<accession>A0PY57</accession>
<evidence type="ECO:0000255" key="1">
    <source>
        <dbReference type="HAMAP-Rule" id="MF_01726"/>
    </source>
</evidence>
<name>POTA_CLONN</name>
<organism>
    <name type="scientific">Clostridium novyi (strain NT)</name>
    <dbReference type="NCBI Taxonomy" id="386415"/>
    <lineage>
        <taxon>Bacteria</taxon>
        <taxon>Bacillati</taxon>
        <taxon>Bacillota</taxon>
        <taxon>Clostridia</taxon>
        <taxon>Eubacteriales</taxon>
        <taxon>Clostridiaceae</taxon>
        <taxon>Clostridium</taxon>
    </lineage>
</organism>
<gene>
    <name evidence="1" type="primary">potA</name>
    <name type="ordered locus">NT01CX_1226</name>
</gene>
<proteinExistence type="inferred from homology"/>
<comment type="function">
    <text evidence="1">Part of the ABC transporter complex PotABCD involved in spermidine/putrescine import. Responsible for energy coupling to the transport system.</text>
</comment>
<comment type="catalytic activity">
    <reaction evidence="1">
        <text>ATP + H2O + polyamine-[polyamine-binding protein]Side 1 = ADP + phosphate + polyamineSide 2 + [polyamine-binding protein]Side 1.</text>
        <dbReference type="EC" id="7.6.2.11"/>
    </reaction>
</comment>
<comment type="subunit">
    <text evidence="1">The complex is composed of two ATP-binding proteins (PotA), two transmembrane proteins (PotB and PotC) and a solute-binding protein (PotD).</text>
</comment>
<comment type="subcellular location">
    <subcellularLocation>
        <location evidence="1">Cell membrane</location>
        <topology evidence="1">Peripheral membrane protein</topology>
    </subcellularLocation>
</comment>
<comment type="similarity">
    <text evidence="1">Belongs to the ABC transporter superfamily. Spermidine/putrescine importer (TC 3.A.1.11.1) family.</text>
</comment>
<reference key="1">
    <citation type="journal article" date="2006" name="Nat. Biotechnol.">
        <title>The genome and transcriptomes of the anti-tumor agent Clostridium novyi-NT.</title>
        <authorList>
            <person name="Bettegowda C."/>
            <person name="Huang X."/>
            <person name="Lin J."/>
            <person name="Cheong I."/>
            <person name="Kohli M."/>
            <person name="Szabo S.A."/>
            <person name="Zhang X."/>
            <person name="Diaz L.A. Jr."/>
            <person name="Velculescu V.E."/>
            <person name="Parmigiani G."/>
            <person name="Kinzler K.W."/>
            <person name="Vogelstein B."/>
            <person name="Zhou S."/>
        </authorList>
    </citation>
    <scope>NUCLEOTIDE SEQUENCE [LARGE SCALE GENOMIC DNA]</scope>
    <source>
        <strain>NT</strain>
    </source>
</reference>